<dbReference type="EMBL" id="CP000932">
    <property type="protein sequence ID" value="ACM64509.1"/>
    <property type="molecule type" value="Genomic_DNA"/>
</dbReference>
<dbReference type="RefSeq" id="WP_012661892.1">
    <property type="nucleotide sequence ID" value="NC_012039.1"/>
</dbReference>
<dbReference type="SMR" id="B9KD70"/>
<dbReference type="STRING" id="306263.Cla_1187"/>
<dbReference type="KEGG" id="cla:CLA_1187"/>
<dbReference type="eggNOG" id="COG0231">
    <property type="taxonomic scope" value="Bacteria"/>
</dbReference>
<dbReference type="HOGENOM" id="CLU_074944_0_1_7"/>
<dbReference type="UniPathway" id="UPA00345"/>
<dbReference type="Proteomes" id="UP000007727">
    <property type="component" value="Chromosome"/>
</dbReference>
<dbReference type="GO" id="GO:0005737">
    <property type="term" value="C:cytoplasm"/>
    <property type="evidence" value="ECO:0007669"/>
    <property type="project" value="UniProtKB-SubCell"/>
</dbReference>
<dbReference type="GO" id="GO:0003746">
    <property type="term" value="F:translation elongation factor activity"/>
    <property type="evidence" value="ECO:0007669"/>
    <property type="project" value="UniProtKB-UniRule"/>
</dbReference>
<dbReference type="GO" id="GO:0043043">
    <property type="term" value="P:peptide biosynthetic process"/>
    <property type="evidence" value="ECO:0007669"/>
    <property type="project" value="InterPro"/>
</dbReference>
<dbReference type="CDD" id="cd04470">
    <property type="entry name" value="S1_EF-P_repeat_1"/>
    <property type="match status" value="1"/>
</dbReference>
<dbReference type="CDD" id="cd05794">
    <property type="entry name" value="S1_EF-P_repeat_2"/>
    <property type="match status" value="1"/>
</dbReference>
<dbReference type="FunFam" id="2.30.30.30:FF:000003">
    <property type="entry name" value="Elongation factor P"/>
    <property type="match status" value="1"/>
</dbReference>
<dbReference type="FunFam" id="2.40.50.140:FF:000004">
    <property type="entry name" value="Elongation factor P"/>
    <property type="match status" value="1"/>
</dbReference>
<dbReference type="FunFam" id="2.40.50.140:FF:000009">
    <property type="entry name" value="Elongation factor P"/>
    <property type="match status" value="1"/>
</dbReference>
<dbReference type="Gene3D" id="2.30.30.30">
    <property type="match status" value="1"/>
</dbReference>
<dbReference type="Gene3D" id="2.40.50.140">
    <property type="entry name" value="Nucleic acid-binding proteins"/>
    <property type="match status" value="2"/>
</dbReference>
<dbReference type="HAMAP" id="MF_00141">
    <property type="entry name" value="EF_P"/>
    <property type="match status" value="1"/>
</dbReference>
<dbReference type="InterPro" id="IPR015365">
    <property type="entry name" value="Elong-fact-P_C"/>
</dbReference>
<dbReference type="InterPro" id="IPR012340">
    <property type="entry name" value="NA-bd_OB-fold"/>
</dbReference>
<dbReference type="InterPro" id="IPR014722">
    <property type="entry name" value="Rib_uL2_dom2"/>
</dbReference>
<dbReference type="InterPro" id="IPR020599">
    <property type="entry name" value="Transl_elong_fac_P/YeiP"/>
</dbReference>
<dbReference type="InterPro" id="IPR013185">
    <property type="entry name" value="Transl_elong_KOW-like"/>
</dbReference>
<dbReference type="InterPro" id="IPR001059">
    <property type="entry name" value="Transl_elong_P/YeiP_cen"/>
</dbReference>
<dbReference type="InterPro" id="IPR011768">
    <property type="entry name" value="Transl_elongation_fac_P"/>
</dbReference>
<dbReference type="InterPro" id="IPR008991">
    <property type="entry name" value="Translation_prot_SH3-like_sf"/>
</dbReference>
<dbReference type="NCBIfam" id="TIGR00038">
    <property type="entry name" value="efp"/>
    <property type="match status" value="1"/>
</dbReference>
<dbReference type="NCBIfam" id="NF001810">
    <property type="entry name" value="PRK00529.1"/>
    <property type="match status" value="1"/>
</dbReference>
<dbReference type="PANTHER" id="PTHR30053">
    <property type="entry name" value="ELONGATION FACTOR P"/>
    <property type="match status" value="1"/>
</dbReference>
<dbReference type="PANTHER" id="PTHR30053:SF12">
    <property type="entry name" value="ELONGATION FACTOR P (EF-P) FAMILY PROTEIN"/>
    <property type="match status" value="1"/>
</dbReference>
<dbReference type="Pfam" id="PF01132">
    <property type="entry name" value="EFP"/>
    <property type="match status" value="1"/>
</dbReference>
<dbReference type="Pfam" id="PF08207">
    <property type="entry name" value="EFP_N"/>
    <property type="match status" value="1"/>
</dbReference>
<dbReference type="Pfam" id="PF09285">
    <property type="entry name" value="Elong-fact-P_C"/>
    <property type="match status" value="1"/>
</dbReference>
<dbReference type="PIRSF" id="PIRSF005901">
    <property type="entry name" value="EF-P"/>
    <property type="match status" value="1"/>
</dbReference>
<dbReference type="SMART" id="SM01185">
    <property type="entry name" value="EFP"/>
    <property type="match status" value="1"/>
</dbReference>
<dbReference type="SMART" id="SM00841">
    <property type="entry name" value="Elong-fact-P_C"/>
    <property type="match status" value="1"/>
</dbReference>
<dbReference type="SUPFAM" id="SSF50249">
    <property type="entry name" value="Nucleic acid-binding proteins"/>
    <property type="match status" value="2"/>
</dbReference>
<dbReference type="SUPFAM" id="SSF50104">
    <property type="entry name" value="Translation proteins SH3-like domain"/>
    <property type="match status" value="1"/>
</dbReference>
<feature type="chain" id="PRO_1000122997" description="Elongation factor P">
    <location>
        <begin position="1"/>
        <end position="189"/>
    </location>
</feature>
<accession>B9KD70</accession>
<keyword id="KW-0963">Cytoplasm</keyword>
<keyword id="KW-0251">Elongation factor</keyword>
<keyword id="KW-0648">Protein biosynthesis</keyword>
<keyword id="KW-1185">Reference proteome</keyword>
<name>EFP_CAMLR</name>
<gene>
    <name evidence="1" type="primary">efp</name>
    <name type="ordered locus">Cla_1187</name>
</gene>
<comment type="function">
    <text evidence="1">Involved in peptide bond synthesis. Stimulates efficient translation and peptide-bond synthesis on native or reconstituted 70S ribosomes in vitro. Probably functions indirectly by altering the affinity of the ribosome for aminoacyl-tRNA, thus increasing their reactivity as acceptors for peptidyl transferase.</text>
</comment>
<comment type="pathway">
    <text evidence="1">Protein biosynthesis; polypeptide chain elongation.</text>
</comment>
<comment type="subcellular location">
    <subcellularLocation>
        <location evidence="1">Cytoplasm</location>
    </subcellularLocation>
</comment>
<comment type="similarity">
    <text evidence="1">Belongs to the elongation factor P family.</text>
</comment>
<proteinExistence type="inferred from homology"/>
<sequence>MASYGMGDLKKGLKIEIDGIPFKIVEYQHVKPGKGPAFVRIKIKSFIDGKVLEKTFHAGDKCESPNLEEKQMQYLYDDGENCQFMDTQTYEQVAISDEDVGEAKKWMLDGTMVDVLFHNGKAIGVEVPQVMELKIIETAPNFKGDTQGSNKKPATLETGAVVQIPFHVLEGEIIRVDTVRGEYIERANK</sequence>
<organism>
    <name type="scientific">Campylobacter lari (strain RM2100 / D67 / ATCC BAA-1060)</name>
    <dbReference type="NCBI Taxonomy" id="306263"/>
    <lineage>
        <taxon>Bacteria</taxon>
        <taxon>Pseudomonadati</taxon>
        <taxon>Campylobacterota</taxon>
        <taxon>Epsilonproteobacteria</taxon>
        <taxon>Campylobacterales</taxon>
        <taxon>Campylobacteraceae</taxon>
        <taxon>Campylobacter</taxon>
    </lineage>
</organism>
<reference key="1">
    <citation type="journal article" date="2008" name="Foodborne Pathog. Dis.">
        <title>The complete genome sequence and analysis of the human pathogen Campylobacter lari.</title>
        <authorList>
            <person name="Miller W.G."/>
            <person name="Wang G."/>
            <person name="Binnewies T.T."/>
            <person name="Parker C.T."/>
        </authorList>
    </citation>
    <scope>NUCLEOTIDE SEQUENCE [LARGE SCALE GENOMIC DNA]</scope>
    <source>
        <strain>RM2100 / D67 / ATCC BAA-1060</strain>
    </source>
</reference>
<evidence type="ECO:0000255" key="1">
    <source>
        <dbReference type="HAMAP-Rule" id="MF_00141"/>
    </source>
</evidence>
<protein>
    <recommendedName>
        <fullName evidence="1">Elongation factor P</fullName>
        <shortName evidence="1">EF-P</shortName>
    </recommendedName>
</protein>